<reference evidence="5" key="1">
    <citation type="journal article" date="2004" name="J. Biochem. Biophys. Methods">
        <title>Sample displacement chromatography of Atlantic Salmon (Salmo salar) thrombin.</title>
        <authorList>
            <person name="Manseth E."/>
            <person name="Skjervold P.O."/>
            <person name="Flengsrud R."/>
        </authorList>
    </citation>
    <scope>PROTEIN SEQUENCE</scope>
    <scope>CATALYTIC ACTIVITY</scope>
    <scope>SUBCELLULAR LOCATION</scope>
    <scope>TISSUE SPECIFICITY</scope>
</reference>
<proteinExistence type="evidence at protein level"/>
<feature type="chain" id="PRO_0000028183" description="Thrombin light chain" evidence="4">
    <location>
        <begin position="1"/>
        <end position="18"/>
    </location>
</feature>
<feature type="chain" id="PRO_0000028184" description="Thrombin heavy chain" evidence="4">
    <location>
        <begin position="19"/>
        <end position="36"/>
    </location>
</feature>
<feature type="domain" description="Peptidase S1" evidence="2">
    <location>
        <begin position="19" status="less than"/>
        <end position="36" status="greater than"/>
    </location>
</feature>
<feature type="non-consecutive residues" evidence="4">
    <location>
        <begin position="18"/>
        <end position="19"/>
    </location>
</feature>
<feature type="non-terminal residue" evidence="4">
    <location>
        <position position="36"/>
    </location>
</feature>
<accession>P84122</accession>
<organism>
    <name type="scientific">Salmo salar</name>
    <name type="common">Atlantic salmon</name>
    <dbReference type="NCBI Taxonomy" id="8030"/>
    <lineage>
        <taxon>Eukaryota</taxon>
        <taxon>Metazoa</taxon>
        <taxon>Chordata</taxon>
        <taxon>Craniata</taxon>
        <taxon>Vertebrata</taxon>
        <taxon>Euteleostomi</taxon>
        <taxon>Actinopterygii</taxon>
        <taxon>Neopterygii</taxon>
        <taxon>Teleostei</taxon>
        <taxon>Protacanthopterygii</taxon>
        <taxon>Salmoniformes</taxon>
        <taxon>Salmonidae</taxon>
        <taxon>Salmoninae</taxon>
        <taxon>Salmo</taxon>
    </lineage>
</organism>
<evidence type="ECO:0000250" key="1"/>
<evidence type="ECO:0000255" key="2">
    <source>
        <dbReference type="PROSITE-ProRule" id="PRU00274"/>
    </source>
</evidence>
<evidence type="ECO:0000269" key="3">
    <source>
    </source>
</evidence>
<evidence type="ECO:0000303" key="4">
    <source>
    </source>
</evidence>
<evidence type="ECO:0000305" key="5"/>
<name>THRB_SALSA</name>
<sequence>SFGSGELVXGEXPXFEKIIVKGIDAEVASAPMQVML</sequence>
<protein>
    <recommendedName>
        <fullName>Thrombin</fullName>
        <ecNumber>3.4.21.5</ecNumber>
    </recommendedName>
    <component>
        <recommendedName>
            <fullName>Thrombin light chain</fullName>
        </recommendedName>
    </component>
    <component>
        <recommendedName>
            <fullName>Thrombin heavy chain</fullName>
        </recommendedName>
    </component>
</protein>
<dbReference type="EC" id="3.4.21.5"/>
<dbReference type="Proteomes" id="UP000087266">
    <property type="component" value="Unplaced"/>
</dbReference>
<dbReference type="GO" id="GO:0005576">
    <property type="term" value="C:extracellular region"/>
    <property type="evidence" value="ECO:0007669"/>
    <property type="project" value="UniProtKB-SubCell"/>
</dbReference>
<dbReference type="GO" id="GO:0004252">
    <property type="term" value="F:serine-type endopeptidase activity"/>
    <property type="evidence" value="ECO:0007669"/>
    <property type="project" value="UniProtKB-EC"/>
</dbReference>
<dbReference type="GO" id="GO:0007596">
    <property type="term" value="P:blood coagulation"/>
    <property type="evidence" value="ECO:0007669"/>
    <property type="project" value="UniProtKB-KW"/>
</dbReference>
<dbReference type="GO" id="GO:0006508">
    <property type="term" value="P:proteolysis"/>
    <property type="evidence" value="ECO:0007669"/>
    <property type="project" value="UniProtKB-KW"/>
</dbReference>
<keyword id="KW-0094">Blood coagulation</keyword>
<keyword id="KW-0106">Calcium</keyword>
<keyword id="KW-0903">Direct protein sequencing</keyword>
<keyword id="KW-0301">Gamma-carboxyglutamic acid</keyword>
<keyword id="KW-0325">Glycoprotein</keyword>
<keyword id="KW-0356">Hemostasis</keyword>
<keyword id="KW-0378">Hydrolase</keyword>
<keyword id="KW-0645">Protease</keyword>
<keyword id="KW-1185">Reference proteome</keyword>
<keyword id="KW-0964">Secreted</keyword>
<keyword id="KW-0720">Serine protease</keyword>
<comment type="function">
    <text evidence="1">Thrombin, which cleaves bonds after Arg and Lys, converts fibrinogen to fibrin and activates factors V, VII, VIII, XIII, and, in complex with thrombomodulin, protein C. Functions in blood homeostasis, inflammation and wound healing (By similarity).</text>
</comment>
<comment type="catalytic activity">
    <reaction evidence="3">
        <text>Selective cleavage of Arg-|-Gly bonds in fibrinogen to form fibrin and release fibrinopeptides A and B.</text>
        <dbReference type="EC" id="3.4.21.5"/>
    </reaction>
</comment>
<comment type="activity regulation">
    <text evidence="1">Inhibited by SERPINA5.</text>
</comment>
<comment type="subunit">
    <text evidence="1">Forms a heterodimer with SERPINA5.</text>
</comment>
<comment type="subcellular location">
    <subcellularLocation>
        <location evidence="3">Secreted</location>
    </subcellularLocation>
</comment>
<comment type="tissue specificity">
    <text evidence="3">Expressed by the liver and secreted in plasma.</text>
</comment>
<comment type="PTM">
    <text evidence="5">The gamma-carboxyglutamyl residues, which bind calcium ions, result from the carboxylation of glutamyl residues by a microsomal enzyme, the vitamin K-dependent carboxylase. The modified residues are necessary for the calcium-dependent interaction with a negatively charged phospholipid surface, which is essential for the conversion of prothrombin to thrombin.</text>
</comment>
<comment type="PTM">
    <text evidence="1">N-glycosylated.</text>
</comment>
<comment type="miscellaneous">
    <text evidence="5">Prothrombin is activated on the surface of a phospholipid membrane that binds the amino end of prothrombin and factors Va and Xa in Ca-dependent interactions; factor Xa removes the activation peptide and cleaves the remaining part into light and heavy chains. The activation process starts slowly because factor V itself has to be activated by the initial, small amounts of thrombin.</text>
</comment>
<comment type="miscellaneous">
    <text>Thrombin can itself cleave the N-terminal fragment (fragment 1) of the prothrombin, prior to its activation by factor Xa.</text>
</comment>
<comment type="similarity">
    <text evidence="2">Belongs to the peptidase S1 family.</text>
</comment>